<proteinExistence type="inferred from homology"/>
<sequence length="483" mass="55456">MKIAYVSYEVSPFAKAGGLADVAGALPKYIKNAGEDIYVVMPFHKNIENNYDISKFEVVKTGLIPDSHTHKSPFSVYKSYLEGSSVVIYFIKTDSLYDSKNIYDEENIFLKTSYFCDSALKTIKECEPDTNVININDWHTSLIPVYLKTHYLQDNILKKIATILTIHNIGYQGLFNPEVLNQAGLPNYLFNMNALEYYGKVNVLKGGILFSNIINTVSPTYAKEIQSEEYGYGLEGILKVRSEDLFGILNGIDYSIYDPLKDPHIFHPIESYEDKLKNKTSLQEYLGLTKDENITLISFIGRLFEQKGIDLISKIMDLLLLNDIQFVLLGTGDKKYEEYFVTLTKLYPKKISINITFDVDLAQKIYAGSDIFLMPSKYEPCGLGQMYSMRYGTVPVVRYTGGLKDTVSEYNPKDKKGTGFGFHEYKEADLLYTLMKAIYFHQKRKDDWTNIFENCMKEDFSYEKTAKKYIELYKIALDKKRGY</sequence>
<keyword id="KW-0320">Glycogen biosynthesis</keyword>
<keyword id="KW-0328">Glycosyltransferase</keyword>
<keyword id="KW-0808">Transferase</keyword>
<evidence type="ECO:0000255" key="1">
    <source>
        <dbReference type="HAMAP-Rule" id="MF_00484"/>
    </source>
</evidence>
<protein>
    <recommendedName>
        <fullName evidence="1">Glycogen synthase</fullName>
        <ecNumber evidence="1">2.4.1.21</ecNumber>
    </recommendedName>
    <alternativeName>
        <fullName evidence="1">Starch [bacterial glycogen] synthase</fullName>
    </alternativeName>
</protein>
<comment type="function">
    <text evidence="1">Synthesizes alpha-1,4-glucan chains using ADP-glucose.</text>
</comment>
<comment type="catalytic activity">
    <reaction evidence="1">
        <text>[(1-&gt;4)-alpha-D-glucosyl](n) + ADP-alpha-D-glucose = [(1-&gt;4)-alpha-D-glucosyl](n+1) + ADP + H(+)</text>
        <dbReference type="Rhea" id="RHEA:18189"/>
        <dbReference type="Rhea" id="RHEA-COMP:9584"/>
        <dbReference type="Rhea" id="RHEA-COMP:9587"/>
        <dbReference type="ChEBI" id="CHEBI:15378"/>
        <dbReference type="ChEBI" id="CHEBI:15444"/>
        <dbReference type="ChEBI" id="CHEBI:57498"/>
        <dbReference type="ChEBI" id="CHEBI:456216"/>
        <dbReference type="EC" id="2.4.1.21"/>
    </reaction>
</comment>
<comment type="pathway">
    <text evidence="1">Glycan biosynthesis; glycogen biosynthesis.</text>
</comment>
<comment type="similarity">
    <text evidence="1">Belongs to the glycosyltransferase 1 family. Bacterial/plant glycogen synthase subfamily.</text>
</comment>
<name>GLGA_PETMO</name>
<gene>
    <name evidence="1" type="primary">glgA</name>
    <name type="ordered locus">Pmob_1105</name>
</gene>
<accession>A9BG68</accession>
<organism>
    <name type="scientific">Petrotoga mobilis (strain DSM 10674 / SJ95)</name>
    <dbReference type="NCBI Taxonomy" id="403833"/>
    <lineage>
        <taxon>Bacteria</taxon>
        <taxon>Thermotogati</taxon>
        <taxon>Thermotogota</taxon>
        <taxon>Thermotogae</taxon>
        <taxon>Petrotogales</taxon>
        <taxon>Petrotogaceae</taxon>
        <taxon>Petrotoga</taxon>
    </lineage>
</organism>
<feature type="chain" id="PRO_1000081328" description="Glycogen synthase">
    <location>
        <begin position="1"/>
        <end position="483"/>
    </location>
</feature>
<feature type="binding site" evidence="1">
    <location>
        <position position="15"/>
    </location>
    <ligand>
        <name>ADP-alpha-D-glucose</name>
        <dbReference type="ChEBI" id="CHEBI:57498"/>
    </ligand>
</feature>
<dbReference type="EC" id="2.4.1.21" evidence="1"/>
<dbReference type="EMBL" id="CP000879">
    <property type="protein sequence ID" value="ABX31824.1"/>
    <property type="molecule type" value="Genomic_DNA"/>
</dbReference>
<dbReference type="RefSeq" id="WP_012208925.1">
    <property type="nucleotide sequence ID" value="NC_010003.1"/>
</dbReference>
<dbReference type="SMR" id="A9BG68"/>
<dbReference type="STRING" id="403833.Pmob_1105"/>
<dbReference type="CAZy" id="GT5">
    <property type="family name" value="Glycosyltransferase Family 5"/>
</dbReference>
<dbReference type="KEGG" id="pmo:Pmob_1105"/>
<dbReference type="eggNOG" id="COG0297">
    <property type="taxonomic scope" value="Bacteria"/>
</dbReference>
<dbReference type="HOGENOM" id="CLU_009583_18_2_0"/>
<dbReference type="OrthoDB" id="9808590at2"/>
<dbReference type="UniPathway" id="UPA00164"/>
<dbReference type="Proteomes" id="UP000000789">
    <property type="component" value="Chromosome"/>
</dbReference>
<dbReference type="GO" id="GO:0009011">
    <property type="term" value="F:alpha-1,4-glucan glucosyltransferase (ADP-glucose donor) activity"/>
    <property type="evidence" value="ECO:0007669"/>
    <property type="project" value="UniProtKB-UniRule"/>
</dbReference>
<dbReference type="GO" id="GO:0004373">
    <property type="term" value="F:alpha-1,4-glucan glucosyltransferase (UDP-glucose donor) activity"/>
    <property type="evidence" value="ECO:0007669"/>
    <property type="project" value="InterPro"/>
</dbReference>
<dbReference type="GO" id="GO:0005978">
    <property type="term" value="P:glycogen biosynthetic process"/>
    <property type="evidence" value="ECO:0007669"/>
    <property type="project" value="UniProtKB-UniRule"/>
</dbReference>
<dbReference type="CDD" id="cd03791">
    <property type="entry name" value="GT5_Glycogen_synthase_DULL1-like"/>
    <property type="match status" value="1"/>
</dbReference>
<dbReference type="Gene3D" id="3.40.50.2000">
    <property type="entry name" value="Glycogen Phosphorylase B"/>
    <property type="match status" value="2"/>
</dbReference>
<dbReference type="HAMAP" id="MF_00484">
    <property type="entry name" value="Glycogen_synth"/>
    <property type="match status" value="1"/>
</dbReference>
<dbReference type="InterPro" id="IPR001296">
    <property type="entry name" value="Glyco_trans_1"/>
</dbReference>
<dbReference type="InterPro" id="IPR011835">
    <property type="entry name" value="GS/SS"/>
</dbReference>
<dbReference type="InterPro" id="IPR013534">
    <property type="entry name" value="Starch_synth_cat_dom"/>
</dbReference>
<dbReference type="NCBIfam" id="TIGR02095">
    <property type="entry name" value="glgA"/>
    <property type="match status" value="1"/>
</dbReference>
<dbReference type="PANTHER" id="PTHR45825:SF11">
    <property type="entry name" value="ALPHA AMYLASE DOMAIN-CONTAINING PROTEIN"/>
    <property type="match status" value="1"/>
</dbReference>
<dbReference type="PANTHER" id="PTHR45825">
    <property type="entry name" value="GRANULE-BOUND STARCH SYNTHASE 1, CHLOROPLASTIC/AMYLOPLASTIC"/>
    <property type="match status" value="1"/>
</dbReference>
<dbReference type="Pfam" id="PF08323">
    <property type="entry name" value="Glyco_transf_5"/>
    <property type="match status" value="1"/>
</dbReference>
<dbReference type="Pfam" id="PF00534">
    <property type="entry name" value="Glycos_transf_1"/>
    <property type="match status" value="1"/>
</dbReference>
<dbReference type="SUPFAM" id="SSF53756">
    <property type="entry name" value="UDP-Glycosyltransferase/glycogen phosphorylase"/>
    <property type="match status" value="1"/>
</dbReference>
<reference key="1">
    <citation type="submission" date="2007-11" db="EMBL/GenBank/DDBJ databases">
        <title>Complete sequence of Petroga mobilis SJ95.</title>
        <authorList>
            <consortium name="US DOE Joint Genome Institute"/>
            <person name="Copeland A."/>
            <person name="Lucas S."/>
            <person name="Lapidus A."/>
            <person name="Barry K."/>
            <person name="Glavina del Rio T."/>
            <person name="Dalin E."/>
            <person name="Tice H."/>
            <person name="Pitluck S."/>
            <person name="Meincke L."/>
            <person name="Brettin T."/>
            <person name="Bruce D."/>
            <person name="Detter J.C."/>
            <person name="Han C."/>
            <person name="Kuske C.R."/>
            <person name="Schmutz J."/>
            <person name="Larimer F."/>
            <person name="Land M."/>
            <person name="Hauser L."/>
            <person name="Kyrpides N."/>
            <person name="Mikhailova N."/>
            <person name="Noll K."/>
            <person name="Richardson P."/>
        </authorList>
    </citation>
    <scope>NUCLEOTIDE SEQUENCE [LARGE SCALE GENOMIC DNA]</scope>
    <source>
        <strain>DSM 10674 / SJ95</strain>
    </source>
</reference>